<comment type="function">
    <text evidence="1">This protein is involved in the repair of mismatches in DNA. It is possible that it carries out the mismatch recognition step. This protein has a weak ATPase activity.</text>
</comment>
<comment type="similarity">
    <text evidence="1">Belongs to the DNA mismatch repair MutS family.</text>
</comment>
<accession>B9IV59</accession>
<keyword id="KW-0067">ATP-binding</keyword>
<keyword id="KW-0227">DNA damage</keyword>
<keyword id="KW-0234">DNA repair</keyword>
<keyword id="KW-0238">DNA-binding</keyword>
<keyword id="KW-0547">Nucleotide-binding</keyword>
<gene>
    <name evidence="1" type="primary">mutS</name>
    <name type="ordered locus">BCQ_3555</name>
</gene>
<dbReference type="EMBL" id="CP000227">
    <property type="protein sequence ID" value="ACM13983.1"/>
    <property type="molecule type" value="Genomic_DNA"/>
</dbReference>
<dbReference type="SMR" id="B9IV59"/>
<dbReference type="KEGG" id="bcq:BCQ_3555"/>
<dbReference type="HOGENOM" id="CLU_002472_3_2_9"/>
<dbReference type="Proteomes" id="UP000000441">
    <property type="component" value="Chromosome"/>
</dbReference>
<dbReference type="GO" id="GO:0005829">
    <property type="term" value="C:cytosol"/>
    <property type="evidence" value="ECO:0007669"/>
    <property type="project" value="TreeGrafter"/>
</dbReference>
<dbReference type="GO" id="GO:0005524">
    <property type="term" value="F:ATP binding"/>
    <property type="evidence" value="ECO:0007669"/>
    <property type="project" value="UniProtKB-UniRule"/>
</dbReference>
<dbReference type="GO" id="GO:0140664">
    <property type="term" value="F:ATP-dependent DNA damage sensor activity"/>
    <property type="evidence" value="ECO:0007669"/>
    <property type="project" value="InterPro"/>
</dbReference>
<dbReference type="GO" id="GO:0003684">
    <property type="term" value="F:damaged DNA binding"/>
    <property type="evidence" value="ECO:0007669"/>
    <property type="project" value="UniProtKB-UniRule"/>
</dbReference>
<dbReference type="GO" id="GO:0030983">
    <property type="term" value="F:mismatched DNA binding"/>
    <property type="evidence" value="ECO:0007669"/>
    <property type="project" value="InterPro"/>
</dbReference>
<dbReference type="GO" id="GO:0006298">
    <property type="term" value="P:mismatch repair"/>
    <property type="evidence" value="ECO:0007669"/>
    <property type="project" value="UniProtKB-UniRule"/>
</dbReference>
<dbReference type="CDD" id="cd03284">
    <property type="entry name" value="ABC_MutS1"/>
    <property type="match status" value="1"/>
</dbReference>
<dbReference type="FunFam" id="1.10.1420.10:FF:000007">
    <property type="entry name" value="DNA mismatch repair protein MutS"/>
    <property type="match status" value="1"/>
</dbReference>
<dbReference type="FunFam" id="3.30.420.110:FF:000007">
    <property type="entry name" value="DNA mismatch repair protein MutS"/>
    <property type="match status" value="1"/>
</dbReference>
<dbReference type="FunFam" id="3.40.1170.10:FF:000001">
    <property type="entry name" value="DNA mismatch repair protein MutS"/>
    <property type="match status" value="1"/>
</dbReference>
<dbReference type="FunFam" id="3.40.50.300:FF:000896">
    <property type="entry name" value="DNA mismatch repair protein MutS"/>
    <property type="match status" value="1"/>
</dbReference>
<dbReference type="Gene3D" id="1.10.1420.10">
    <property type="match status" value="2"/>
</dbReference>
<dbReference type="Gene3D" id="3.40.1170.10">
    <property type="entry name" value="DNA repair protein MutS, domain I"/>
    <property type="match status" value="1"/>
</dbReference>
<dbReference type="Gene3D" id="3.30.420.110">
    <property type="entry name" value="MutS, connector domain"/>
    <property type="match status" value="1"/>
</dbReference>
<dbReference type="Gene3D" id="3.40.50.300">
    <property type="entry name" value="P-loop containing nucleotide triphosphate hydrolases"/>
    <property type="match status" value="1"/>
</dbReference>
<dbReference type="HAMAP" id="MF_00096">
    <property type="entry name" value="MutS"/>
    <property type="match status" value="1"/>
</dbReference>
<dbReference type="InterPro" id="IPR005748">
    <property type="entry name" value="DNA_mismatch_repair_MutS"/>
</dbReference>
<dbReference type="InterPro" id="IPR007695">
    <property type="entry name" value="DNA_mismatch_repair_MutS-lik_N"/>
</dbReference>
<dbReference type="InterPro" id="IPR017261">
    <property type="entry name" value="DNA_mismatch_repair_MutS/MSH"/>
</dbReference>
<dbReference type="InterPro" id="IPR000432">
    <property type="entry name" value="DNA_mismatch_repair_MutS_C"/>
</dbReference>
<dbReference type="InterPro" id="IPR007861">
    <property type="entry name" value="DNA_mismatch_repair_MutS_clamp"/>
</dbReference>
<dbReference type="InterPro" id="IPR007696">
    <property type="entry name" value="DNA_mismatch_repair_MutS_core"/>
</dbReference>
<dbReference type="InterPro" id="IPR016151">
    <property type="entry name" value="DNA_mismatch_repair_MutS_N"/>
</dbReference>
<dbReference type="InterPro" id="IPR036187">
    <property type="entry name" value="DNA_mismatch_repair_MutS_sf"/>
</dbReference>
<dbReference type="InterPro" id="IPR007860">
    <property type="entry name" value="DNA_mmatch_repair_MutS_con_dom"/>
</dbReference>
<dbReference type="InterPro" id="IPR045076">
    <property type="entry name" value="MutS"/>
</dbReference>
<dbReference type="InterPro" id="IPR036678">
    <property type="entry name" value="MutS_con_dom_sf"/>
</dbReference>
<dbReference type="InterPro" id="IPR027417">
    <property type="entry name" value="P-loop_NTPase"/>
</dbReference>
<dbReference type="NCBIfam" id="TIGR01070">
    <property type="entry name" value="mutS1"/>
    <property type="match status" value="1"/>
</dbReference>
<dbReference type="NCBIfam" id="NF003810">
    <property type="entry name" value="PRK05399.1"/>
    <property type="match status" value="1"/>
</dbReference>
<dbReference type="PANTHER" id="PTHR11361:SF34">
    <property type="entry name" value="DNA MISMATCH REPAIR PROTEIN MSH1, MITOCHONDRIAL"/>
    <property type="match status" value="1"/>
</dbReference>
<dbReference type="PANTHER" id="PTHR11361">
    <property type="entry name" value="DNA MISMATCH REPAIR PROTEIN MUTS FAMILY MEMBER"/>
    <property type="match status" value="1"/>
</dbReference>
<dbReference type="Pfam" id="PF01624">
    <property type="entry name" value="MutS_I"/>
    <property type="match status" value="1"/>
</dbReference>
<dbReference type="Pfam" id="PF05188">
    <property type="entry name" value="MutS_II"/>
    <property type="match status" value="1"/>
</dbReference>
<dbReference type="Pfam" id="PF05192">
    <property type="entry name" value="MutS_III"/>
    <property type="match status" value="1"/>
</dbReference>
<dbReference type="Pfam" id="PF05190">
    <property type="entry name" value="MutS_IV"/>
    <property type="match status" value="1"/>
</dbReference>
<dbReference type="Pfam" id="PF00488">
    <property type="entry name" value="MutS_V"/>
    <property type="match status" value="1"/>
</dbReference>
<dbReference type="PIRSF" id="PIRSF037677">
    <property type="entry name" value="DNA_mis_repair_Msh6"/>
    <property type="match status" value="1"/>
</dbReference>
<dbReference type="SMART" id="SM00534">
    <property type="entry name" value="MUTSac"/>
    <property type="match status" value="1"/>
</dbReference>
<dbReference type="SMART" id="SM00533">
    <property type="entry name" value="MUTSd"/>
    <property type="match status" value="1"/>
</dbReference>
<dbReference type="SUPFAM" id="SSF55271">
    <property type="entry name" value="DNA repair protein MutS, domain I"/>
    <property type="match status" value="1"/>
</dbReference>
<dbReference type="SUPFAM" id="SSF53150">
    <property type="entry name" value="DNA repair protein MutS, domain II"/>
    <property type="match status" value="1"/>
</dbReference>
<dbReference type="SUPFAM" id="SSF48334">
    <property type="entry name" value="DNA repair protein MutS, domain III"/>
    <property type="match status" value="1"/>
</dbReference>
<dbReference type="SUPFAM" id="SSF52540">
    <property type="entry name" value="P-loop containing nucleoside triphosphate hydrolases"/>
    <property type="match status" value="1"/>
</dbReference>
<dbReference type="PROSITE" id="PS00486">
    <property type="entry name" value="DNA_MISMATCH_REPAIR_2"/>
    <property type="match status" value="1"/>
</dbReference>
<feature type="chain" id="PRO_1000192197" description="DNA mismatch repair protein MutS">
    <location>
        <begin position="1"/>
        <end position="892"/>
    </location>
</feature>
<feature type="region of interest" description="Disordered" evidence="2">
    <location>
        <begin position="833"/>
        <end position="854"/>
    </location>
</feature>
<feature type="compositionally biased region" description="Basic and acidic residues" evidence="2">
    <location>
        <begin position="845"/>
        <end position="854"/>
    </location>
</feature>
<feature type="binding site" evidence="1">
    <location>
        <begin position="607"/>
        <end position="614"/>
    </location>
    <ligand>
        <name>ATP</name>
        <dbReference type="ChEBI" id="CHEBI:30616"/>
    </ligand>
</feature>
<name>MUTS_BACCQ</name>
<organism>
    <name type="scientific">Bacillus cereus (strain Q1)</name>
    <dbReference type="NCBI Taxonomy" id="361100"/>
    <lineage>
        <taxon>Bacteria</taxon>
        <taxon>Bacillati</taxon>
        <taxon>Bacillota</taxon>
        <taxon>Bacilli</taxon>
        <taxon>Bacillales</taxon>
        <taxon>Bacillaceae</taxon>
        <taxon>Bacillus</taxon>
        <taxon>Bacillus cereus group</taxon>
    </lineage>
</organism>
<evidence type="ECO:0000255" key="1">
    <source>
        <dbReference type="HAMAP-Rule" id="MF_00096"/>
    </source>
</evidence>
<evidence type="ECO:0000256" key="2">
    <source>
        <dbReference type="SAM" id="MobiDB-lite"/>
    </source>
</evidence>
<protein>
    <recommendedName>
        <fullName evidence="1">DNA mismatch repair protein MutS</fullName>
    </recommendedName>
</protein>
<reference key="1">
    <citation type="journal article" date="2009" name="J. Bacteriol.">
        <title>Complete genome sequence of the extremophilic Bacillus cereus strain Q1 with industrial applications.</title>
        <authorList>
            <person name="Xiong Z."/>
            <person name="Jiang Y."/>
            <person name="Qi D."/>
            <person name="Lu H."/>
            <person name="Yang F."/>
            <person name="Yang J."/>
            <person name="Chen L."/>
            <person name="Sun L."/>
            <person name="Xu X."/>
            <person name="Xue Y."/>
            <person name="Zhu Y."/>
            <person name="Jin Q."/>
        </authorList>
    </citation>
    <scope>NUCLEOTIDE SEQUENCE [LARGE SCALE GENOMIC DNA]</scope>
    <source>
        <strain>Q1</strain>
    </source>
</reference>
<sequence length="892" mass="101138">MTQYTPMIQQYLKVKADYQDAFLFFRLGDFYEMFFEDAVKAAHELEITLTSRDGGSSERIPMCGVPYHAAKNYIEQLVEKGYKVAVCEQVEDPKTAKGVVRREVVQLITPGTMMEGRTIDEKENNFLAALTHFEDGSYALACNDLTTGQNTVTLLTGSVEDILLEVYATGSKEIVVDSSFSKDELNKLTETLKMTISYEDATAIPEGLEHLVKNVSQAKLIKAVGRLFNYVIRTQKRSLDHLQPVEIYYTNQFMKIDVHSKRNLELTETLRTKEKTGSLLWLLDKTKTAMGGRMLKQWMERPLIQKERIEERLEMVETFVNDYFLREDLKEKLKEVYDLERLAGKVAFGNVNARDLLQLRRSLLQVPAILEAISLLDNAYAARLIQGADPCESLTELLGRSIQENPPLSIKDGDIIKDGYNDKLDQYRYVSKNGKTWIAELEKRERDITGIKSLKIGYNRIFGYYIEVTKANLGALPEGRYERKQTLANAERFITDELKEKETLILEAEEKIVQLEYDLFTALREEVKVFIPKLQHLAKVISELDVLQSFATVSEEEQFVKPVLTTKREIFIKDGRHPVVEKVLNGKLYVPNDCIMPENMDVFLITGPNMSGKSTYMRQLALVTVMSQIGCFVPATEAVLPVFDQIFTRIGAADDLISGQSTFMVEMLEAKNAIANASERSLILFDEIGRGTSTYDGMALAQAIIEHIHDQIGAKTLFSTHYHELTVLEESLDQLKNVHVSAIEENGKVVFLHKIQDGAADKSYGIHVAQLAELPDSLIARAKEVLAQLEGQEEIIIPKRVEVKMQEQEVIPEPVVVKEAPVEIEETKVENEEESQLSFFGGEQSPKKQDKPVLDTKETAVLAQIKKIDLLDMTPLEAMNELYRLQKKLKKG</sequence>
<proteinExistence type="inferred from homology"/>